<sequence>VNFSEFSKKCSERWKTMSAKEKGKFEDMAKADKARYEREMKTYIPPKGETKKKFKDPNAPKRPPSAFFLFCSEYRPKIKGEHPGLSIGDVAKKLGEMWNNTAADDKQPYEKKAAKLKEKYEKDIAAYRAKGKPDAAKKGVVKAEKSKKKKEEEDDEEDEEDEEEEEEEEDEDEEEDDDDE</sequence>
<gene>
    <name type="primary">HMGB1</name>
    <name type="synonym">HMG-1</name>
    <name type="synonym">HMG1</name>
</gene>
<comment type="function">
    <text evidence="1 2 4">Multifunctional redox sensitive protein with various roles in different cellular compartments. In the nucleus is one of the major chromatin-associated non-histone proteins and acts as a DNA chaperone involved in replication, transcription, chromatin remodeling, V(D)J recombination, DNA repair and genome stability. Proposed to be an universal biosensor for nucleic acids. Promotes host inflammatory response to sterile and infectious signals and is involved in the coordination and integration of innate and adaptive immune responses. In the cytoplasm functions as a sensor and/or chaperone for immunogenic nucleic acids implicating the activation of TLR9-mediated immune responses, and mediates autophagy. Acts as a danger-associated molecular pattern (DAMP) molecule that amplifies immune responses during tissue injury. Released to the extracellular environment can bind DNA, nucleosomes, IL-1 beta, CXCL12, AGER isoform 2/sRAGE, lipopolysaccharide (LPS) and lipoteichoic acid (LTA), and activates cells through engagement of multiple surface receptors. In the extracellular compartment fully reduced HMGB1 (released by necrosis) acts as a chemokine, disulfide HMGB1 (actively secreted) as a cytokine, and sulfonyl HMGB1 (released from apoptotic cells) promotes immunological tolerance. Has proangiogenic activity. May be involved in platelet activation. Binds to phosphatidylserine and phosphatidylethanolamide. Bound to RAGE mediates signaling for neuronal outgrowth. May play a role in accumulation of expanded polyglutamine (polyQ) proteins.</text>
</comment>
<comment type="function">
    <text evidence="1 2 3 4">Nuclear functions are attributed to fully reduced HGMB1. Associates with chromatin and binds DNA with a preference to non-canonical DNA structures such as single-stranded DNA, DNA-containing cruciforms or bent structures, supercoiled DNA and ZDNA. Can bent DNA and enhance DNA flexibility by looping thus providing a mechanism to promote activities on various gene promoters by enhancing transcription factor binding and/or bringing distant regulatory sequences into close proximity. May be involved in nucleotide excision repair (NER), mismatch repair (MMR) and base excision repair (BER) pathways, and double strand break repair such as non-homologous end joining (NHEJ). Involved in V(D)J recombination by acting as a cofactor of the RAG complex: acts by stimulating cleavage and RAG protein binding at the 23 bp spacer of conserved recombination signal sequences (RSS). In vitro can displace histone H1 from highly bent DNA. Can restructure the canonical nucleosome leading to relaxation of structural constraints for transcription factor-binding. Enhances binding of sterol regulatory element-binding proteins (SREBPs) such as SREBF1 to their cognate DNA sequences and increases their transcriptional activities. Facilitates binding of TP53 to DNA. May be involved in mitochondrial quality control and autophagy in a transcription-dependent fashion implicating HSPB1. Can modulate the activity of the telomerase complex and may be involved in telomere maintenance.</text>
</comment>
<comment type="function">
    <text evidence="1 3">In the cytoplasm proposed to dissociate the BECN1:BCL2 complex via competitive interaction with BECN1 leading to autophagy activation. Can protect BECN1 and ATG5 from calpain-mediated cleavage and thus proposed to control their proautophagic and proapoptotic functions and to regulate the extent and severity of inflammation-associated cellular injury. In myeloid cells has a protective role against endotoxemia and bacterial infection by promoting autophagy. Involved in endosomal translocation and activation of TLR9 in response to CpG-DNA in macrophages.</text>
</comment>
<comment type="function">
    <text evidence="1 2 3 4">In the extracellular compartment (following either active secretion or passive release) involved in regulation of the inflammatory response. Fully reduced HGMB1 (which subsequently gets oxidized after release) in association with CXCL12 mediates the recruitment of inflammatory cells during the initial phase of tissue injury; the CXCL12:HMGB1 complex triggers CXCR4 homodimerization. Induces the migration of monocyte-derived immature dendritic cells and seems to regulate adhesive and migratory functions of neutrophils implicating AGER/RAGE and ITGAM. Can bind to various types of DNA and RNA including microbial unmethylated CpG-DNA to enhance the innate immune response to nucleic acids. Proposed to act in promiscuous DNA/RNA sensing which cooperates with subsequent discriminative sensing by specific pattern recognition receptors. Promotes extracellular DNA-induced AIM2 inflammasome activation implicating AGER/RAGE. Disulfide HMGB1 binds to transmembrane receptors, such as AGER/RAGE, TLR2, TLR4 and probably TREM1, thus activating their signal transduction pathways. Mediates the release of cytokines/chemokines such as TNF, IL-1, IL-6, IL-8, CCL2, CCL3, CCL4 and CXCL10. Promotes secretion of interferon-gamma by macrophage-stimulated natural killer (NK) cells in concert with other cytokines like IL-2 or IL-12. TLR4 is proposed to be the primary receptor promoting macrophage activation and signaling through TLR4 seems to implicate LY96/MD-2. In bacterial LPS- or LTA-mediated inflammatory responses binds to the endotoxins and transfers them to CD14 for signaling to the respective TLR4:LY96 and TLR2 complexes. Contributes to tumor proliferation by association with ACER/RAGE. Can bind to IL1-beta and signals through the IL1R1:IL1RAP receptor complex. Binding to class A CpG activates cytokine production in plasmacytoid dendritic cells implicating TLR9, MYD88 and AGER/RAGE and can activate autoreactive B cells. Via HMGB1-containing chromatin immune complexes may also promote B cell responses to endogenous TLR9 ligands through a B-cell receptor (BCR)-dependent and ACER/RAGE-independent mechanism. Inhibits phagocytosis of apoptotic cells by macrophages; the function is dependent on poly-ADP-ribosylation and involves binding to phosphatidylserine on the cell surface of apoptotic cells. In adaptive immunity may be involved in enhancing immunity through activation of effector T-cells and suppression of regulatory T (TReg) cells. In contrast, without implicating effector or regulatory T-cells, required for tumor infiltration and activation of T-cells expressing the lymphotoxin LTA:LTB heterotrimer thus promoting tumor malignant progression. Also reported to limit proliferation of T-cells. Released HMGB1:nucleosome complexes formed during apoptosis can signal through TLR2 to induce cytokine production. Involved in induction of immunological tolerance by apoptotic cells; its pro-inflammatory activities when released by apoptotic cells are neutralized by reactive oxygen species (ROS)-dependent oxidation specifically on Cys-106. During macrophage activation by activated lymphocyte-derived self apoptotic DNA (ALD-DNA) promotes recruitment of ALD-DNA to endosomes.</text>
</comment>
<comment type="subunit">
    <text evidence="1 3 4">Interacts (fully reduced HMGB1) with CXCL12; probably in a 1:2 ratio involving two molecules of CXCL12, each interacting with one HMG box of HMGB1; inhibited by glycyrrhizin. Associates with the TLR4:LY96 receptor complex. Component of the RAG complex composed of core components RAG1 and RAG2, and associated component HMGB1 or HMGB2. Interacts (in cytoplasm upon starvation) with BECN1; inhibits the interaction of BECN1 and BCL2 leading to promotion of autophagy. Interacts with KPNA1; involved in nuclear import. Interacts with SREBF1, TLR2, TLR4, TLR9, PTPRZ1, APEX1, FEN1, POLB, TERT. Interacts with IL1B, AGER, MSH2, XPA, XPC, HNF1A, TP53. Interacts with CD24; the probable CD24:SIGLEC10 complex is proposed to inhibit HGMB1-mediated tissue damage immune response. Interacts with THBD; prevents HGMB1 interaction with ACER/RAGE and inhibits HGMB1 pro-inflammatory activity. Interacts with HAVCR2; impairs HMGB1 binding to B-DNA and likely HMGB1-mediated innate immune response. Interacts with XPO1; mediating nuclear export. Interacts with receptor RAGE/AGER (By similarity).</text>
</comment>
<comment type="subcellular location">
    <subcellularLocation>
        <location evidence="1">Nucleus</location>
    </subcellularLocation>
    <subcellularLocation>
        <location evidence="2 4">Chromosome</location>
    </subcellularLocation>
    <subcellularLocation>
        <location evidence="1">Cytoplasm</location>
    </subcellularLocation>
    <subcellularLocation>
        <location evidence="1 3">Secreted</location>
    </subcellularLocation>
    <subcellularLocation>
        <location evidence="1 3 4">Cell membrane</location>
        <topology evidence="1 3 4">Peripheral membrane protein</topology>
        <orientation evidence="1 3 4">Extracellular side</orientation>
    </subcellularLocation>
    <subcellularLocation>
        <location evidence="3">Endosome</location>
    </subcellularLocation>
    <subcellularLocation>
        <location evidence="3">Endoplasmic reticulum-Golgi intermediate compartment</location>
    </subcellularLocation>
    <text evidence="1 3">In basal state predominantly nuclear. Shuttles between the cytoplasm and the nucleus. Translocates from the nucleus to the cytoplasm upon autophagy stimulation. Release from macrophages in the extracellular milieu requires the activation of NLRC4 or NLRP3 inflammasomes (By similarity). Passively released to the extracellular milieu from necrotic cells by diffusion, involving the fully reduced HGMB1 which subsequently gets oxidized. Also released from apoptotic cells. Active secretion from a variety of immune and non-immune cells such as macrophages, monocytes, neutrophils, dendritic cells, natural killer cells and plasma cells in response to various stimuli such as LPS and cytokines involves a nonconventional secretory process via secretory lysosomes. Found on the surface of activated platelets.</text>
</comment>
<comment type="domain">
    <text evidence="1">HMG box 2 mediates pro-inflammatory cytokine-stimulating activity and binding to TLR4. However, not involved in mediating immunogenic activity in the context of apoptosis-induced immune tolerance.</text>
</comment>
<comment type="domain">
    <text evidence="1 4">The acidic C-terminal domain forms a flexible structure which can reversibly interact intramolecularily with the HMG boxes and modulate binding to DNA and other proteins.</text>
</comment>
<comment type="PTM">
    <text evidence="1">Phosphorylated at serine residues. Phosphorylation in both NLS regions is required for cytoplasmic translocation followed by secretion.</text>
</comment>
<comment type="PTM">
    <text evidence="1 2 4">Acetylated on multiple sites upon stimulation with LPS (By similarity). Acetylation on lysine residues in the nuclear localization signals (NLS 1 and NLS 2) leads to cytoplasmic localization and subsequent secretion (By similarity).</text>
</comment>
<comment type="PTM">
    <text evidence="1">Reduction/oxidation of cysteine residues and a possible intramolecular disulfide bond give rise to different redox forms with specific functional activities in various cellular compartments: 1- fully reduced HMGB1 (HMGB1C23hC45hC106h), 2-disulfide HMGB1 (HMGB1C23-C45C106h) and 3- sulfonyl HMGB1 (HMGB1C23soC45soC106so).</text>
</comment>
<comment type="PTM">
    <text evidence="3">Poly-ADP-ribosylated by PARP1 when secreted following stimulation with LPS (By similarity).</text>
</comment>
<comment type="PTM">
    <text evidence="1 2">In vitro cleavage by CASP1 is liberating a HMG box 1-containing peptide which may mediate immunogenic activity; the peptide antagonizes apoptosis-induced immune tolerance. Can be proteolytically cleaved by a thrombin:thrombomodulin complex; reduces binding to heparin and pro-inflammatory activities (By similarity).</text>
</comment>
<comment type="PTM">
    <text evidence="1">Forms covalent cross-links mediated by transglutaminase TGM2, between a glutamine and the epsilon-amino group of a lysine residue, forming homopolymers and heteropolymers.</text>
</comment>
<comment type="similarity">
    <text evidence="7">Belongs to the HMGB family.</text>
</comment>
<reference key="1">
    <citation type="journal article" date="1987" name="Nucleic Acids Res.">
        <title>Characterization of cDNA sequences corresponding to three distinct HMG-1 mRNA species in line CHO Chinese hamster cells and cell cycle expression of the HMG-1 gene.</title>
        <authorList>
            <person name="Lee K.-L.D."/>
            <person name="Pentecost B.T."/>
            <person name="D'Anna J.A."/>
            <person name="Tobey R.A."/>
            <person name="Gurley L.R."/>
            <person name="Dixon G.H."/>
        </authorList>
    </citation>
    <scope>NUCLEOTIDE SEQUENCE [GENOMIC DNA]</scope>
</reference>
<reference key="2">
    <citation type="journal article" date="1993" name="Nucleic Acids Res.">
        <title>Solution structure of a DNA-binding domain from HMG1.</title>
        <authorList>
            <person name="Read C.M."/>
            <person name="Cary P.D."/>
            <person name="Crane-Robinson C."/>
            <person name="Driscoll P.C."/>
            <person name="Norman D.G."/>
        </authorList>
    </citation>
    <scope>STRUCTURE BY NMR OF 57-136</scope>
</reference>
<accession>P07156</accession>
<proteinExistence type="evidence at protein level"/>
<protein>
    <recommendedName>
        <fullName>High mobility group protein B1</fullName>
    </recommendedName>
    <alternativeName>
        <fullName>High mobility group protein 1</fullName>
        <shortName>HMG-1</shortName>
    </alternativeName>
</protein>
<feature type="chain" id="PRO_0000048525" description="High mobility group protein B1">
    <location>
        <begin position="1" status="less than"/>
        <end position="180"/>
    </location>
</feature>
<feature type="DNA-binding region" description="HMG box 1" evidence="5">
    <location>
        <begin position="1" status="less than"/>
        <end position="44"/>
    </location>
</feature>
<feature type="DNA-binding region" description="HMG box 2" evidence="5">
    <location>
        <begin position="60"/>
        <end position="128"/>
    </location>
</feature>
<feature type="region of interest" description="LPS binding (Lipid A)" evidence="1">
    <location>
        <begin position="45"/>
        <end position="61"/>
    </location>
</feature>
<feature type="region of interest" description="Cytokine-stimulating activity" evidence="1">
    <location>
        <begin position="54"/>
        <end position="73"/>
    </location>
</feature>
<feature type="region of interest" description="Binding to AGER/RAGE" evidence="4">
    <location>
        <begin position="115"/>
        <end position="148"/>
    </location>
</feature>
<feature type="region of interest" description="Disordered" evidence="6">
    <location>
        <begin position="126"/>
        <end position="180"/>
    </location>
</feature>
<feature type="region of interest" description="NLS 2" evidence="4">
    <location>
        <begin position="143"/>
        <end position="149"/>
    </location>
</feature>
<feature type="short sequence motif" description="Nuclear localization signal (NLS) 1" evidence="4">
    <location>
        <begin position="1" status="less than"/>
        <end position="8"/>
    </location>
</feature>
<feature type="short sequence motif" description="Nuclear localization signal (NLS) 2" evidence="4">
    <location>
        <begin position="143"/>
        <end position="149"/>
    </location>
</feature>
<feature type="compositionally biased region" description="Basic and acidic residues" evidence="6">
    <location>
        <begin position="126"/>
        <end position="144"/>
    </location>
</feature>
<feature type="compositionally biased region" description="Acidic residues" evidence="6">
    <location>
        <begin position="152"/>
        <end position="180"/>
    </location>
</feature>
<feature type="site" description="Cleavage; by CASP1" evidence="1">
    <location>
        <begin position="32"/>
        <end position="33"/>
    </location>
</feature>
<feature type="modified residue" description="N6-acetyllysine" evidence="3">
    <location>
        <position position="8"/>
    </location>
</feature>
<feature type="modified residue" description="Cysteine sulfonic acid (-SO3H)" evidence="4">
    <location>
        <position position="10"/>
    </location>
</feature>
<feature type="modified residue" description="N6-acetyllysine" evidence="3">
    <location>
        <position position="55"/>
    </location>
</feature>
<feature type="modified residue" description="Phosphoserine" evidence="1">
    <location>
        <position position="65"/>
    </location>
</feature>
<feature type="modified residue" description="Cysteine sulfonic acid (-SO3H)" evidence="4">
    <location>
        <position position="71"/>
    </location>
</feature>
<feature type="modified residue" description="N6-acetyllysine" evidence="2">
    <location>
        <position position="92"/>
    </location>
</feature>
<feature type="modified residue" description="N6-acetyllysine" evidence="2">
    <location>
        <position position="93"/>
    </location>
</feature>
<feature type="modified residue" description="N6-acetyllysine" evidence="3">
    <location>
        <position position="106"/>
    </location>
</feature>
<feature type="modified residue" description="N6-acetyllysine" evidence="2">
    <location>
        <position position="137"/>
    </location>
</feature>
<feature type="modified residue" description="N6-acetyllysine" evidence="2">
    <location>
        <position position="138"/>
    </location>
</feature>
<feature type="modified residue" description="N6-acetyllysine" evidence="2">
    <location>
        <position position="142"/>
    </location>
</feature>
<feature type="modified residue" description="N6-acetyllysine" evidence="2">
    <location>
        <position position="145"/>
    </location>
</feature>
<feature type="modified residue" description="ADP-ribosylserine" evidence="1">
    <location>
        <position position="146"/>
    </location>
</feature>
<feature type="modified residue" description="N6-acetyllysine" evidence="2">
    <location>
        <position position="147"/>
    </location>
</feature>
<feature type="modified residue" description="N6-acetyllysine" evidence="2">
    <location>
        <position position="148"/>
    </location>
</feature>
<feature type="modified residue" description="N6-acetyllysine" evidence="2">
    <location>
        <position position="149"/>
    </location>
</feature>
<feature type="modified residue" description="N6-acetyllysine" evidence="2">
    <location>
        <position position="150"/>
    </location>
</feature>
<feature type="cross-link" description="Isoglutamyl lysine isopeptide (Lys-Gln) (interchain with Q-?)" evidence="1">
    <location>
        <position position="8"/>
    </location>
</feature>
<feature type="cross-link" description="Isoglutamyl lysine isopeptide (Lys-Gln) (interchain with Q-?)" evidence="1">
    <location>
        <position position="9"/>
    </location>
</feature>
<feature type="cross-link" description="Isoglutamyl lysine isopeptide (Lys-Gln) (interchain with Q-?)" evidence="1">
    <location>
        <position position="33"/>
    </location>
</feature>
<feature type="cross-link" description="Isoglutamyl lysine isopeptide (Lys-Gln) (interchain with Q-?)" evidence="1">
    <location>
        <position position="145"/>
    </location>
</feature>
<feature type="cross-link" description="Isoglutamyl lysine isopeptide (Lys-Gln) (interchain with Q-?)" evidence="1">
    <location>
        <position position="147"/>
    </location>
</feature>
<feature type="cross-link" description="Isoglutamyl lysine isopeptide (Lys-Gln) (interchain with Q-?)" evidence="1">
    <location>
        <position position="148"/>
    </location>
</feature>
<feature type="cross-link" description="Isoglutamyl lysine isopeptide (Lys-Gln) (interchain with Q-?)" evidence="1">
    <location>
        <position position="149"/>
    </location>
</feature>
<feature type="non-terminal residue">
    <location>
        <position position="1"/>
    </location>
</feature>
<feature type="helix" evidence="8">
    <location>
        <begin position="67"/>
        <end position="81"/>
    </location>
</feature>
<feature type="turn" evidence="8">
    <location>
        <begin position="87"/>
        <end position="89"/>
    </location>
</feature>
<feature type="helix" evidence="8">
    <location>
        <begin position="90"/>
        <end position="99"/>
    </location>
</feature>
<feature type="turn" evidence="8">
    <location>
        <begin position="104"/>
        <end position="106"/>
    </location>
</feature>
<feature type="helix" evidence="8">
    <location>
        <begin position="107"/>
        <end position="130"/>
    </location>
</feature>
<feature type="turn" evidence="8">
    <location>
        <begin position="131"/>
        <end position="135"/>
    </location>
</feature>
<organism>
    <name type="scientific">Cricetulus griseus</name>
    <name type="common">Chinese hamster</name>
    <name type="synonym">Cricetulus barabensis griseus</name>
    <dbReference type="NCBI Taxonomy" id="10029"/>
    <lineage>
        <taxon>Eukaryota</taxon>
        <taxon>Metazoa</taxon>
        <taxon>Chordata</taxon>
        <taxon>Craniata</taxon>
        <taxon>Vertebrata</taxon>
        <taxon>Euteleostomi</taxon>
        <taxon>Mammalia</taxon>
        <taxon>Eutheria</taxon>
        <taxon>Euarchontoglires</taxon>
        <taxon>Glires</taxon>
        <taxon>Rodentia</taxon>
        <taxon>Myomorpha</taxon>
        <taxon>Muroidea</taxon>
        <taxon>Cricetidae</taxon>
        <taxon>Cricetinae</taxon>
        <taxon>Cricetulus</taxon>
    </lineage>
</organism>
<evidence type="ECO:0000250" key="1">
    <source>
        <dbReference type="UniProtKB" id="P09429"/>
    </source>
</evidence>
<evidence type="ECO:0000250" key="2">
    <source>
        <dbReference type="UniProtKB" id="P10103"/>
    </source>
</evidence>
<evidence type="ECO:0000250" key="3">
    <source>
        <dbReference type="UniProtKB" id="P63158"/>
    </source>
</evidence>
<evidence type="ECO:0000250" key="4">
    <source>
        <dbReference type="UniProtKB" id="P63159"/>
    </source>
</evidence>
<evidence type="ECO:0000255" key="5">
    <source>
        <dbReference type="PROSITE-ProRule" id="PRU00267"/>
    </source>
</evidence>
<evidence type="ECO:0000256" key="6">
    <source>
        <dbReference type="SAM" id="MobiDB-lite"/>
    </source>
</evidence>
<evidence type="ECO:0000305" key="7"/>
<evidence type="ECO:0007829" key="8">
    <source>
        <dbReference type="PDB" id="1HSM"/>
    </source>
</evidence>
<dbReference type="EMBL" id="Y00365">
    <property type="protein sequence ID" value="CAA68441.1"/>
    <property type="molecule type" value="Genomic_DNA"/>
</dbReference>
<dbReference type="PIR" id="A27853">
    <property type="entry name" value="A27853"/>
</dbReference>
<dbReference type="PDB" id="1HSM">
    <property type="method" value="NMR"/>
    <property type="chains" value="A=58-136"/>
</dbReference>
<dbReference type="PDB" id="1HSN">
    <property type="method" value="NMR"/>
    <property type="chains" value="A=58-136"/>
</dbReference>
<dbReference type="PDB" id="1NHM">
    <property type="method" value="NMR"/>
    <property type="chains" value="A=58-136"/>
</dbReference>
<dbReference type="PDB" id="1NHN">
    <property type="method" value="NMR"/>
    <property type="chains" value="A=58-136"/>
</dbReference>
<dbReference type="PDBsum" id="1HSM"/>
<dbReference type="PDBsum" id="1HSN"/>
<dbReference type="PDBsum" id="1NHM"/>
<dbReference type="PDBsum" id="1NHN"/>
<dbReference type="BMRB" id="P07156"/>
<dbReference type="SMR" id="P07156"/>
<dbReference type="PaxDb" id="10029-XP_007630683.1"/>
<dbReference type="eggNOG" id="KOG0381">
    <property type="taxonomic scope" value="Eukaryota"/>
</dbReference>
<dbReference type="EvolutionaryTrace" id="P07156"/>
<dbReference type="Proteomes" id="UP000694386">
    <property type="component" value="Unplaced"/>
</dbReference>
<dbReference type="Proteomes" id="UP001108280">
    <property type="component" value="Unplaced"/>
</dbReference>
<dbReference type="GO" id="GO:0000793">
    <property type="term" value="C:condensed chromosome"/>
    <property type="evidence" value="ECO:0000250"/>
    <property type="project" value="UniProtKB"/>
</dbReference>
<dbReference type="GO" id="GO:0005793">
    <property type="term" value="C:endoplasmic reticulum-Golgi intermediate compartment"/>
    <property type="evidence" value="ECO:0007669"/>
    <property type="project" value="UniProtKB-SubCell"/>
</dbReference>
<dbReference type="GO" id="GO:0005768">
    <property type="term" value="C:endosome"/>
    <property type="evidence" value="ECO:0007669"/>
    <property type="project" value="UniProtKB-SubCell"/>
</dbReference>
<dbReference type="GO" id="GO:0005576">
    <property type="term" value="C:extracellular region"/>
    <property type="evidence" value="ECO:0007669"/>
    <property type="project" value="UniProtKB-SubCell"/>
</dbReference>
<dbReference type="GO" id="GO:0005634">
    <property type="term" value="C:nucleus"/>
    <property type="evidence" value="ECO:0007669"/>
    <property type="project" value="UniProtKB-SubCell"/>
</dbReference>
<dbReference type="GO" id="GO:0005886">
    <property type="term" value="C:plasma membrane"/>
    <property type="evidence" value="ECO:0007669"/>
    <property type="project" value="UniProtKB-SubCell"/>
</dbReference>
<dbReference type="GO" id="GO:0003677">
    <property type="term" value="F:DNA binding"/>
    <property type="evidence" value="ECO:0007669"/>
    <property type="project" value="UniProtKB-KW"/>
</dbReference>
<dbReference type="GO" id="GO:0002250">
    <property type="term" value="P:adaptive immune response"/>
    <property type="evidence" value="ECO:0007669"/>
    <property type="project" value="UniProtKB-KW"/>
</dbReference>
<dbReference type="GO" id="GO:0043277">
    <property type="term" value="P:apoptotic cell clearance"/>
    <property type="evidence" value="ECO:0000250"/>
    <property type="project" value="UniProtKB"/>
</dbReference>
<dbReference type="GO" id="GO:0006914">
    <property type="term" value="P:autophagy"/>
    <property type="evidence" value="ECO:0007669"/>
    <property type="project" value="UniProtKB-KW"/>
</dbReference>
<dbReference type="GO" id="GO:0006935">
    <property type="term" value="P:chemotaxis"/>
    <property type="evidence" value="ECO:0007669"/>
    <property type="project" value="UniProtKB-KW"/>
</dbReference>
<dbReference type="GO" id="GO:0006310">
    <property type="term" value="P:DNA recombination"/>
    <property type="evidence" value="ECO:0007669"/>
    <property type="project" value="UniProtKB-KW"/>
</dbReference>
<dbReference type="GO" id="GO:0006302">
    <property type="term" value="P:double-strand break repair"/>
    <property type="evidence" value="ECO:0000250"/>
    <property type="project" value="UniProtKB"/>
</dbReference>
<dbReference type="GO" id="GO:0006954">
    <property type="term" value="P:inflammatory response"/>
    <property type="evidence" value="ECO:0007669"/>
    <property type="project" value="UniProtKB-KW"/>
</dbReference>
<dbReference type="GO" id="GO:0045087">
    <property type="term" value="P:innate immune response"/>
    <property type="evidence" value="ECO:0007669"/>
    <property type="project" value="UniProtKB-KW"/>
</dbReference>
<dbReference type="GO" id="GO:0017055">
    <property type="term" value="P:negative regulation of RNA polymerase II transcription preinitiation complex assembly"/>
    <property type="evidence" value="ECO:0000250"/>
    <property type="project" value="UniProtKB"/>
</dbReference>
<dbReference type="GO" id="GO:0097350">
    <property type="term" value="P:neutrophil clearance"/>
    <property type="evidence" value="ECO:0000250"/>
    <property type="project" value="UniProtKB"/>
</dbReference>
<dbReference type="GO" id="GO:0034165">
    <property type="term" value="P:positive regulation of toll-like receptor 9 signaling pathway"/>
    <property type="evidence" value="ECO:0000250"/>
    <property type="project" value="UniProtKB"/>
</dbReference>
<dbReference type="GO" id="GO:0002840">
    <property type="term" value="P:regulation of T cell mediated immune response to tumor cell"/>
    <property type="evidence" value="ECO:0000250"/>
    <property type="project" value="UniProtKB"/>
</dbReference>
<dbReference type="CDD" id="cd21978">
    <property type="entry name" value="HMG-box_HMGB_rpt1"/>
    <property type="match status" value="1"/>
</dbReference>
<dbReference type="CDD" id="cd21979">
    <property type="entry name" value="HMG-box_HMGB_rpt2"/>
    <property type="match status" value="1"/>
</dbReference>
<dbReference type="FunFam" id="1.10.30.10:FF:000015">
    <property type="entry name" value="high mobility group protein B1"/>
    <property type="match status" value="1"/>
</dbReference>
<dbReference type="Gene3D" id="1.10.30.10">
    <property type="entry name" value="High mobility group box domain"/>
    <property type="match status" value="2"/>
</dbReference>
<dbReference type="InterPro" id="IPR009071">
    <property type="entry name" value="HMG_box_dom"/>
</dbReference>
<dbReference type="InterPro" id="IPR036910">
    <property type="entry name" value="HMG_box_dom_sf"/>
</dbReference>
<dbReference type="InterPro" id="IPR017967">
    <property type="entry name" value="HMG_boxA_CS"/>
</dbReference>
<dbReference type="InterPro" id="IPR050342">
    <property type="entry name" value="HMGB"/>
</dbReference>
<dbReference type="PANTHER" id="PTHR48112:SF35">
    <property type="entry name" value="HIGH MOBILITY GROUP PROTEIN B1"/>
    <property type="match status" value="1"/>
</dbReference>
<dbReference type="PANTHER" id="PTHR48112">
    <property type="entry name" value="HIGH MOBILITY GROUP PROTEIN DSP1"/>
    <property type="match status" value="1"/>
</dbReference>
<dbReference type="Pfam" id="PF00505">
    <property type="entry name" value="HMG_box"/>
    <property type="match status" value="1"/>
</dbReference>
<dbReference type="Pfam" id="PF09011">
    <property type="entry name" value="HMG_box_2"/>
    <property type="match status" value="1"/>
</dbReference>
<dbReference type="PRINTS" id="PR00886">
    <property type="entry name" value="HIGHMOBLTY12"/>
</dbReference>
<dbReference type="SMART" id="SM00398">
    <property type="entry name" value="HMG"/>
    <property type="match status" value="2"/>
</dbReference>
<dbReference type="SUPFAM" id="SSF47095">
    <property type="entry name" value="HMG-box"/>
    <property type="match status" value="2"/>
</dbReference>
<dbReference type="PROSITE" id="PS00353">
    <property type="entry name" value="HMG_BOX_1"/>
    <property type="match status" value="1"/>
</dbReference>
<dbReference type="PROSITE" id="PS50118">
    <property type="entry name" value="HMG_BOX_2"/>
    <property type="match status" value="2"/>
</dbReference>
<name>HMGB1_CRIGR</name>
<keyword id="KW-0002">3D-structure</keyword>
<keyword id="KW-0007">Acetylation</keyword>
<keyword id="KW-1064">Adaptive immunity</keyword>
<keyword id="KW-0013">ADP-ribosylation</keyword>
<keyword id="KW-0072">Autophagy</keyword>
<keyword id="KW-1003">Cell membrane</keyword>
<keyword id="KW-0145">Chemotaxis</keyword>
<keyword id="KW-0158">Chromosome</keyword>
<keyword id="KW-0963">Cytoplasm</keyword>
<keyword id="KW-1015">Disulfide bond</keyword>
<keyword id="KW-0227">DNA damage</keyword>
<keyword id="KW-0233">DNA recombination</keyword>
<keyword id="KW-0234">DNA repair</keyword>
<keyword id="KW-0238">DNA-binding</keyword>
<keyword id="KW-0967">Endosome</keyword>
<keyword id="KW-0391">Immunity</keyword>
<keyword id="KW-0395">Inflammatory response</keyword>
<keyword id="KW-0399">Innate immunity</keyword>
<keyword id="KW-1017">Isopeptide bond</keyword>
<keyword id="KW-0472">Membrane</keyword>
<keyword id="KW-0539">Nucleus</keyword>
<keyword id="KW-0558">Oxidation</keyword>
<keyword id="KW-0597">Phosphoprotein</keyword>
<keyword id="KW-0677">Repeat</keyword>
<keyword id="KW-0964">Secreted</keyword>